<evidence type="ECO:0000250" key="1">
    <source>
        <dbReference type="UniProtKB" id="Q13347"/>
    </source>
</evidence>
<evidence type="ECO:0000255" key="2">
    <source>
        <dbReference type="HAMAP-Rule" id="MF_03008"/>
    </source>
</evidence>
<reference key="1">
    <citation type="submission" date="2004-11" db="EMBL/GenBank/DDBJ databases">
        <authorList>
            <consortium name="The German cDNA consortium"/>
        </authorList>
    </citation>
    <scope>NUCLEOTIDE SEQUENCE [LARGE SCALE MRNA]</scope>
    <source>
        <tissue>Liver</tissue>
    </source>
</reference>
<comment type="function">
    <text evidence="2">Component of the eukaryotic translation initiation factor 3 (eIF-3) complex, which is required for several steps in the initiation of protein synthesis. The eIF-3 complex associates with the 40S ribosome and facilitates the recruitment of eIF-1, eIF-1A, eIF-2:GTP:methionyl-tRNAi and eIF-5 to form the 43S pre-initiation complex (43S PIC). The eIF-3 complex stimulates mRNA recruitment to the 43S PIC and scanning of the mRNA for AUG recognition. The eIF-3 complex is also required for disassembly and recycling of post-termination ribosomal complexes and subsequently prevents premature joining of the 40S and 60S ribosomal subunits prior to initiation. The eIF-3 complex specifically targets and initiates translation of a subset of mRNAs involved in cell proliferation, including cell cycling, differentiation and apoptosis, and uses different modes of RNA stem-loop binding to exert either translational activation or repression.</text>
</comment>
<comment type="subunit">
    <text evidence="2">Component of the eukaryotic translation initiation factor 3 (eIF-3) complex, which is composed of 13 subunits: EIF3A, EIF3B, EIF3C, EIF3D, EIF3E, EIF3F, EIF3G, EIF3H, EIF3I, EIF3J, EIF3K, EIF3L and EIF3M. The eIF-3 complex appears to include 3 stable modules: module A is composed of EIF3A, EIF3B, EIF3G and EIF3I; module B is composed of EIF3F, EIF3H, and EIF3M; and module C is composed of EIF3C, EIF3D, EIF3E, EIF3K and EIF3L. EIF3C of module C binds EIF3B of module A and EIF3H of module B, thereby linking the three modules. EIF3J is a labile subunit that binds to the eIF-3 complex via EIF3B. The eIF-3 complex interacts with RPS6KB1 under conditions of nutrient depletion. Mitogenic stimulation leads to binding and activation of a complex composed of MTOR and RPTOR, leading to phosphorylation and release of RPS6KB1 and binding of EIF4B to eIF-3.</text>
</comment>
<comment type="subcellular location">
    <subcellularLocation>
        <location evidence="2">Cytoplasm</location>
    </subcellularLocation>
</comment>
<comment type="PTM">
    <text evidence="2">Phosphorylated by TGF-beta type II receptor.</text>
</comment>
<comment type="similarity">
    <text evidence="2">Belongs to the eIF-3 subunit I family.</text>
</comment>
<organism>
    <name type="scientific">Pongo abelii</name>
    <name type="common">Sumatran orangutan</name>
    <name type="synonym">Pongo pygmaeus abelii</name>
    <dbReference type="NCBI Taxonomy" id="9601"/>
    <lineage>
        <taxon>Eukaryota</taxon>
        <taxon>Metazoa</taxon>
        <taxon>Chordata</taxon>
        <taxon>Craniata</taxon>
        <taxon>Vertebrata</taxon>
        <taxon>Euteleostomi</taxon>
        <taxon>Mammalia</taxon>
        <taxon>Eutheria</taxon>
        <taxon>Euarchontoglires</taxon>
        <taxon>Primates</taxon>
        <taxon>Haplorrhini</taxon>
        <taxon>Catarrhini</taxon>
        <taxon>Hominidae</taxon>
        <taxon>Pongo</taxon>
    </lineage>
</organism>
<protein>
    <recommendedName>
        <fullName evidence="2">Eukaryotic translation initiation factor 3 subunit I</fullName>
        <shortName evidence="2">eIF3i</shortName>
    </recommendedName>
    <alternativeName>
        <fullName evidence="2">Eukaryotic translation initiation factor 3 subunit 2</fullName>
    </alternativeName>
    <alternativeName>
        <fullName evidence="2">eIF-3-beta</fullName>
    </alternativeName>
    <alternativeName>
        <fullName evidence="2">eIF3 p36</fullName>
    </alternativeName>
</protein>
<gene>
    <name evidence="2" type="primary">EIF3I</name>
    <name evidence="2" type="synonym">EIF3S2</name>
</gene>
<accession>Q5R7R2</accession>
<feature type="chain" id="PRO_0000365329" description="Eukaryotic translation initiation factor 3 subunit I">
    <location>
        <begin position="1"/>
        <end position="325"/>
    </location>
</feature>
<feature type="repeat" description="WD 1">
    <location>
        <begin position="8"/>
        <end position="47"/>
    </location>
</feature>
<feature type="repeat" description="WD 2">
    <location>
        <begin position="50"/>
        <end position="91"/>
    </location>
</feature>
<feature type="repeat" description="WD 3">
    <location>
        <begin position="144"/>
        <end position="183"/>
    </location>
</feature>
<feature type="repeat" description="WD 4">
    <location>
        <begin position="186"/>
        <end position="225"/>
    </location>
</feature>
<feature type="repeat" description="WD 5">
    <location>
        <begin position="283"/>
        <end position="324"/>
    </location>
</feature>
<feature type="modified residue" description="Phosphothreonine" evidence="1">
    <location>
        <position position="219"/>
    </location>
</feature>
<feature type="modified residue" description="N6-acetyllysine" evidence="1">
    <location>
        <position position="264"/>
    </location>
</feature>
<feature type="modified residue" description="Phosphotyrosine" evidence="1">
    <location>
        <position position="308"/>
    </location>
</feature>
<feature type="cross-link" description="Glycyl lysine isopeptide (Lys-Gly) (interchain with G-Cter in ubiquitin)" evidence="1">
    <location>
        <position position="282"/>
    </location>
</feature>
<dbReference type="EMBL" id="CR860050">
    <property type="protein sequence ID" value="CAH92198.1"/>
    <property type="molecule type" value="mRNA"/>
</dbReference>
<dbReference type="RefSeq" id="NP_001126286.1">
    <property type="nucleotide sequence ID" value="NM_001132814.1"/>
</dbReference>
<dbReference type="SMR" id="Q5R7R2"/>
<dbReference type="STRING" id="9601.ENSPPYP00000001842"/>
<dbReference type="GeneID" id="100173261"/>
<dbReference type="KEGG" id="pon:100173261"/>
<dbReference type="CTD" id="8668"/>
<dbReference type="eggNOG" id="KOG0643">
    <property type="taxonomic scope" value="Eukaryota"/>
</dbReference>
<dbReference type="InParanoid" id="Q5R7R2"/>
<dbReference type="OrthoDB" id="24966at2759"/>
<dbReference type="Proteomes" id="UP000001595">
    <property type="component" value="Unplaced"/>
</dbReference>
<dbReference type="GO" id="GO:0016282">
    <property type="term" value="C:eukaryotic 43S preinitiation complex"/>
    <property type="evidence" value="ECO:0007669"/>
    <property type="project" value="UniProtKB-UniRule"/>
</dbReference>
<dbReference type="GO" id="GO:0033290">
    <property type="term" value="C:eukaryotic 48S preinitiation complex"/>
    <property type="evidence" value="ECO:0007669"/>
    <property type="project" value="UniProtKB-UniRule"/>
</dbReference>
<dbReference type="GO" id="GO:0005852">
    <property type="term" value="C:eukaryotic translation initiation factor 3 complex"/>
    <property type="evidence" value="ECO:0000250"/>
    <property type="project" value="UniProtKB"/>
</dbReference>
<dbReference type="GO" id="GO:0071541">
    <property type="term" value="C:eukaryotic translation initiation factor 3 complex, eIF3m"/>
    <property type="evidence" value="ECO:0007669"/>
    <property type="project" value="TreeGrafter"/>
</dbReference>
<dbReference type="GO" id="GO:0003723">
    <property type="term" value="F:RNA binding"/>
    <property type="evidence" value="ECO:0007669"/>
    <property type="project" value="TreeGrafter"/>
</dbReference>
<dbReference type="GO" id="GO:0003743">
    <property type="term" value="F:translation initiation factor activity"/>
    <property type="evidence" value="ECO:0000250"/>
    <property type="project" value="UniProtKB"/>
</dbReference>
<dbReference type="GO" id="GO:0001732">
    <property type="term" value="P:formation of cytoplasmic translation initiation complex"/>
    <property type="evidence" value="ECO:0007669"/>
    <property type="project" value="UniProtKB-UniRule"/>
</dbReference>
<dbReference type="GO" id="GO:0006413">
    <property type="term" value="P:translational initiation"/>
    <property type="evidence" value="ECO:0000250"/>
    <property type="project" value="UniProtKB"/>
</dbReference>
<dbReference type="FunFam" id="2.130.10.10:FF:000127">
    <property type="entry name" value="Eukaryotic translation initiation factor 3 subunit I"/>
    <property type="match status" value="1"/>
</dbReference>
<dbReference type="Gene3D" id="2.130.10.10">
    <property type="entry name" value="YVTN repeat-like/Quinoprotein amine dehydrogenase"/>
    <property type="match status" value="1"/>
</dbReference>
<dbReference type="HAMAP" id="MF_03008">
    <property type="entry name" value="eIF3i"/>
    <property type="match status" value="1"/>
</dbReference>
<dbReference type="InterPro" id="IPR027525">
    <property type="entry name" value="eIF3i"/>
</dbReference>
<dbReference type="InterPro" id="IPR015943">
    <property type="entry name" value="WD40/YVTN_repeat-like_dom_sf"/>
</dbReference>
<dbReference type="InterPro" id="IPR019775">
    <property type="entry name" value="WD40_repeat_CS"/>
</dbReference>
<dbReference type="InterPro" id="IPR036322">
    <property type="entry name" value="WD40_repeat_dom_sf"/>
</dbReference>
<dbReference type="InterPro" id="IPR001680">
    <property type="entry name" value="WD40_rpt"/>
</dbReference>
<dbReference type="PANTHER" id="PTHR19877">
    <property type="entry name" value="EUKARYOTIC TRANSLATION INITIATION FACTOR 3 SUBUNIT I"/>
    <property type="match status" value="1"/>
</dbReference>
<dbReference type="PANTHER" id="PTHR19877:SF1">
    <property type="entry name" value="EUKARYOTIC TRANSLATION INITIATION FACTOR 3 SUBUNIT I"/>
    <property type="match status" value="1"/>
</dbReference>
<dbReference type="Pfam" id="PF24805">
    <property type="entry name" value="EIF3I"/>
    <property type="match status" value="1"/>
</dbReference>
<dbReference type="SMART" id="SM00320">
    <property type="entry name" value="WD40"/>
    <property type="match status" value="5"/>
</dbReference>
<dbReference type="SUPFAM" id="SSF50978">
    <property type="entry name" value="WD40 repeat-like"/>
    <property type="match status" value="1"/>
</dbReference>
<dbReference type="PROSITE" id="PS00678">
    <property type="entry name" value="WD_REPEATS_1"/>
    <property type="match status" value="1"/>
</dbReference>
<dbReference type="PROSITE" id="PS50082">
    <property type="entry name" value="WD_REPEATS_2"/>
    <property type="match status" value="4"/>
</dbReference>
<dbReference type="PROSITE" id="PS50294">
    <property type="entry name" value="WD_REPEATS_REGION"/>
    <property type="match status" value="2"/>
</dbReference>
<name>EIF3I_PONAB</name>
<proteinExistence type="evidence at transcript level"/>
<keyword id="KW-0007">Acetylation</keyword>
<keyword id="KW-0963">Cytoplasm</keyword>
<keyword id="KW-0396">Initiation factor</keyword>
<keyword id="KW-1017">Isopeptide bond</keyword>
<keyword id="KW-0597">Phosphoprotein</keyword>
<keyword id="KW-0648">Protein biosynthesis</keyword>
<keyword id="KW-1185">Reference proteome</keyword>
<keyword id="KW-0677">Repeat</keyword>
<keyword id="KW-0832">Ubl conjugation</keyword>
<keyword id="KW-0853">WD repeat</keyword>
<sequence length="325" mass="36491">MKPILLQGHERSITQIKYNREGDLLFTVAKDPIVNVWYSVNGERLGTYMGHTGAVWCVDADWDTKHVLTGSADNSCRLWDCETGKQLALLKTNSAVRTCGFDFGGSIIMFSTDKQMGYQCFVSFFDLRDPSQIDNNEPYMKIPCNDSKITSAVWGPLGECIIAGHESGELNQYSAKSGEVLVNVKEHSRQINDIQLSRDMTMFVTASKDNTAKLFDSTTLEHQKTFRTERPVNSAALSPNYDHVVLGGGQEAMDVTTTSTRIGKFEARFFHLAFEEEFGRVKGHFGLINSVAFHPDGKSYSSGGEDGYVRIHYFDPQYFEFEFEA</sequence>